<keyword id="KW-0025">Alternative splicing</keyword>
<keyword id="KW-1003">Cell membrane</keyword>
<keyword id="KW-0325">Glycoprotein</keyword>
<keyword id="KW-0445">Lipid transport</keyword>
<keyword id="KW-0472">Membrane</keyword>
<keyword id="KW-1267">Proteomics identification</keyword>
<keyword id="KW-1185">Reference proteome</keyword>
<keyword id="KW-0812">Transmembrane</keyword>
<keyword id="KW-1133">Transmembrane helix</keyword>
<keyword id="KW-0813">Transport</keyword>
<evidence type="ECO:0000255" key="1"/>
<evidence type="ECO:0000256" key="2">
    <source>
        <dbReference type="SAM" id="MobiDB-lite"/>
    </source>
</evidence>
<evidence type="ECO:0000269" key="3">
    <source>
    </source>
</evidence>
<evidence type="ECO:0000269" key="4">
    <source>
    </source>
</evidence>
<evidence type="ECO:0000269" key="5">
    <source>
    </source>
</evidence>
<evidence type="ECO:0000269" key="6">
    <source>
    </source>
</evidence>
<evidence type="ECO:0000269" key="7">
    <source>
    </source>
</evidence>
<evidence type="ECO:0000303" key="8">
    <source>
    </source>
</evidence>
<evidence type="ECO:0000303" key="9">
    <source>
    </source>
</evidence>
<evidence type="ECO:0000305" key="10"/>
<evidence type="ECO:0000305" key="11">
    <source>
    </source>
</evidence>
<evidence type="ECO:0000305" key="12">
    <source>
    </source>
</evidence>
<organism>
    <name type="scientific">Homo sapiens</name>
    <name type="common">Human</name>
    <dbReference type="NCBI Taxonomy" id="9606"/>
    <lineage>
        <taxon>Eukaryota</taxon>
        <taxon>Metazoa</taxon>
        <taxon>Chordata</taxon>
        <taxon>Craniata</taxon>
        <taxon>Vertebrata</taxon>
        <taxon>Euteleostomi</taxon>
        <taxon>Mammalia</taxon>
        <taxon>Eutheria</taxon>
        <taxon>Euarchontoglires</taxon>
        <taxon>Primates</taxon>
        <taxon>Haplorrhini</taxon>
        <taxon>Catarrhini</taxon>
        <taxon>Hominidae</taxon>
        <taxon>Homo</taxon>
    </lineage>
</organism>
<proteinExistence type="evidence at protein level"/>
<gene>
    <name type="primary">SLC22A9</name>
    <name type="synonym">hOAT4</name>
    <name type="synonym">OAT7</name>
    <name type="synonym">UST3</name>
</gene>
<reference key="1">
    <citation type="journal article" date="2007" name="Hepatology">
        <title>Novel liver-specific organic anion transporter OAT7 that operates the exchange of sulfate conjugates for short chain fatty acid butyrate.</title>
        <authorList>
            <person name="Shin H.J."/>
            <person name="Anzai N."/>
            <person name="Enomoto A."/>
            <person name="He X."/>
            <person name="Kim do K."/>
            <person name="Endou H."/>
            <person name="Kanai Y."/>
        </authorList>
    </citation>
    <scope>NUCLEOTIDE SEQUENCE [MRNA] (ISOFORM 1)</scope>
    <scope>FUNCTION</scope>
    <scope>TRANSPORTER ACTIVITY</scope>
    <scope>BIOPHYSICOCHEMICAL PROPERTIES</scope>
    <scope>SUBCELLULAR LOCATION</scope>
    <scope>TISSUE SPECIFICITY</scope>
    <scope>DEVELOPMENTAL STAGE</scope>
    <source>
        <tissue>Liver</tissue>
    </source>
</reference>
<reference key="2">
    <citation type="submission" date="2000-11" db="EMBL/GenBank/DDBJ databases">
        <title>Putative integral membrane transport protein UST3H.</title>
        <authorList>
            <person name="Engel K."/>
            <person name="Gruendemann D."/>
            <person name="Schoemig E."/>
        </authorList>
    </citation>
    <scope>NUCLEOTIDE SEQUENCE [MRNA] (ISOFORM 1)</scope>
    <source>
        <tissue>Kidney</tissue>
    </source>
</reference>
<reference key="3">
    <citation type="submission" date="2001-05" db="EMBL/GenBank/DDBJ databases">
        <title>Isolation of novel clone of amphiphilic solute facilitator family from human fetal liver.</title>
        <authorList>
            <person name="Takanaga H."/>
            <person name="Ohtsuki S."/>
            <person name="Hosoya K."/>
            <person name="Terasaki T."/>
        </authorList>
    </citation>
    <scope>NUCLEOTIDE SEQUENCE [MRNA] (ISOFORM 1)</scope>
    <source>
        <tissue>Fetal liver</tissue>
    </source>
</reference>
<reference key="4">
    <citation type="submission" date="2001-10" db="EMBL/GenBank/DDBJ databases">
        <authorList>
            <person name="Guo J.H."/>
            <person name="Yu L."/>
        </authorList>
    </citation>
    <scope>NUCLEOTIDE SEQUENCE [LARGE SCALE MRNA] (ISOFORM 1)</scope>
</reference>
<reference key="5">
    <citation type="journal article" date="2004" name="Nat. Genet.">
        <title>Complete sequencing and characterization of 21,243 full-length human cDNAs.</title>
        <authorList>
            <person name="Ota T."/>
            <person name="Suzuki Y."/>
            <person name="Nishikawa T."/>
            <person name="Otsuki T."/>
            <person name="Sugiyama T."/>
            <person name="Irie R."/>
            <person name="Wakamatsu A."/>
            <person name="Hayashi K."/>
            <person name="Sato H."/>
            <person name="Nagai K."/>
            <person name="Kimura K."/>
            <person name="Makita H."/>
            <person name="Sekine M."/>
            <person name="Obayashi M."/>
            <person name="Nishi T."/>
            <person name="Shibahara T."/>
            <person name="Tanaka T."/>
            <person name="Ishii S."/>
            <person name="Yamamoto J."/>
            <person name="Saito K."/>
            <person name="Kawai Y."/>
            <person name="Isono Y."/>
            <person name="Nakamura Y."/>
            <person name="Nagahari K."/>
            <person name="Murakami K."/>
            <person name="Yasuda T."/>
            <person name="Iwayanagi T."/>
            <person name="Wagatsuma M."/>
            <person name="Shiratori A."/>
            <person name="Sudo H."/>
            <person name="Hosoiri T."/>
            <person name="Kaku Y."/>
            <person name="Kodaira H."/>
            <person name="Kondo H."/>
            <person name="Sugawara M."/>
            <person name="Takahashi M."/>
            <person name="Kanda K."/>
            <person name="Yokoi T."/>
            <person name="Furuya T."/>
            <person name="Kikkawa E."/>
            <person name="Omura Y."/>
            <person name="Abe K."/>
            <person name="Kamihara K."/>
            <person name="Katsuta N."/>
            <person name="Sato K."/>
            <person name="Tanikawa M."/>
            <person name="Yamazaki M."/>
            <person name="Ninomiya K."/>
            <person name="Ishibashi T."/>
            <person name="Yamashita H."/>
            <person name="Murakawa K."/>
            <person name="Fujimori K."/>
            <person name="Tanai H."/>
            <person name="Kimata M."/>
            <person name="Watanabe M."/>
            <person name="Hiraoka S."/>
            <person name="Chiba Y."/>
            <person name="Ishida S."/>
            <person name="Ono Y."/>
            <person name="Takiguchi S."/>
            <person name="Watanabe S."/>
            <person name="Yosida M."/>
            <person name="Hotuta T."/>
            <person name="Kusano J."/>
            <person name="Kanehori K."/>
            <person name="Takahashi-Fujii A."/>
            <person name="Hara H."/>
            <person name="Tanase T.-O."/>
            <person name="Nomura Y."/>
            <person name="Togiya S."/>
            <person name="Komai F."/>
            <person name="Hara R."/>
            <person name="Takeuchi K."/>
            <person name="Arita M."/>
            <person name="Imose N."/>
            <person name="Musashino K."/>
            <person name="Yuuki H."/>
            <person name="Oshima A."/>
            <person name="Sasaki N."/>
            <person name="Aotsuka S."/>
            <person name="Yoshikawa Y."/>
            <person name="Matsunawa H."/>
            <person name="Ichihara T."/>
            <person name="Shiohata N."/>
            <person name="Sano S."/>
            <person name="Moriya S."/>
            <person name="Momiyama H."/>
            <person name="Satoh N."/>
            <person name="Takami S."/>
            <person name="Terashima Y."/>
            <person name="Suzuki O."/>
            <person name="Nakagawa S."/>
            <person name="Senoh A."/>
            <person name="Mizoguchi H."/>
            <person name="Goto Y."/>
            <person name="Shimizu F."/>
            <person name="Wakebe H."/>
            <person name="Hishigaki H."/>
            <person name="Watanabe T."/>
            <person name="Sugiyama A."/>
            <person name="Takemoto M."/>
            <person name="Kawakami B."/>
            <person name="Yamazaki M."/>
            <person name="Watanabe K."/>
            <person name="Kumagai A."/>
            <person name="Itakura S."/>
            <person name="Fukuzumi Y."/>
            <person name="Fujimori Y."/>
            <person name="Komiyama M."/>
            <person name="Tashiro H."/>
            <person name="Tanigami A."/>
            <person name="Fujiwara T."/>
            <person name="Ono T."/>
            <person name="Yamada K."/>
            <person name="Fujii Y."/>
            <person name="Ozaki K."/>
            <person name="Hirao M."/>
            <person name="Ohmori Y."/>
            <person name="Kawabata A."/>
            <person name="Hikiji T."/>
            <person name="Kobatake N."/>
            <person name="Inagaki H."/>
            <person name="Ikema Y."/>
            <person name="Okamoto S."/>
            <person name="Okitani R."/>
            <person name="Kawakami T."/>
            <person name="Noguchi S."/>
            <person name="Itoh T."/>
            <person name="Shigeta K."/>
            <person name="Senba T."/>
            <person name="Matsumura K."/>
            <person name="Nakajima Y."/>
            <person name="Mizuno T."/>
            <person name="Morinaga M."/>
            <person name="Sasaki M."/>
            <person name="Togashi T."/>
            <person name="Oyama M."/>
            <person name="Hata H."/>
            <person name="Watanabe M."/>
            <person name="Komatsu T."/>
            <person name="Mizushima-Sugano J."/>
            <person name="Satoh T."/>
            <person name="Shirai Y."/>
            <person name="Takahashi Y."/>
            <person name="Nakagawa K."/>
            <person name="Okumura K."/>
            <person name="Nagase T."/>
            <person name="Nomura N."/>
            <person name="Kikuchi H."/>
            <person name="Masuho Y."/>
            <person name="Yamashita R."/>
            <person name="Nakai K."/>
            <person name="Yada T."/>
            <person name="Nakamura Y."/>
            <person name="Ohara O."/>
            <person name="Isogai T."/>
            <person name="Sugano S."/>
        </authorList>
    </citation>
    <scope>NUCLEOTIDE SEQUENCE [LARGE SCALE MRNA] (ISOFORM 1)</scope>
    <source>
        <tissue>Hepatoma</tissue>
    </source>
</reference>
<reference key="6">
    <citation type="journal article" date="2006" name="Nature">
        <title>Human chromosome 11 DNA sequence and analysis including novel gene identification.</title>
        <authorList>
            <person name="Taylor T.D."/>
            <person name="Noguchi H."/>
            <person name="Totoki Y."/>
            <person name="Toyoda A."/>
            <person name="Kuroki Y."/>
            <person name="Dewar K."/>
            <person name="Lloyd C."/>
            <person name="Itoh T."/>
            <person name="Takeda T."/>
            <person name="Kim D.-W."/>
            <person name="She X."/>
            <person name="Barlow K.F."/>
            <person name="Bloom T."/>
            <person name="Bruford E."/>
            <person name="Chang J.L."/>
            <person name="Cuomo C.A."/>
            <person name="Eichler E."/>
            <person name="FitzGerald M.G."/>
            <person name="Jaffe D.B."/>
            <person name="LaButti K."/>
            <person name="Nicol R."/>
            <person name="Park H.-S."/>
            <person name="Seaman C."/>
            <person name="Sougnez C."/>
            <person name="Yang X."/>
            <person name="Zimmer A.R."/>
            <person name="Zody M.C."/>
            <person name="Birren B.W."/>
            <person name="Nusbaum C."/>
            <person name="Fujiyama A."/>
            <person name="Hattori M."/>
            <person name="Rogers J."/>
            <person name="Lander E.S."/>
            <person name="Sakaki Y."/>
        </authorList>
    </citation>
    <scope>NUCLEOTIDE SEQUENCE [LARGE SCALE GENOMIC DNA]</scope>
</reference>
<reference key="7">
    <citation type="submission" date="2005-07" db="EMBL/GenBank/DDBJ databases">
        <authorList>
            <person name="Mural R.J."/>
            <person name="Istrail S."/>
            <person name="Sutton G.G."/>
            <person name="Florea L."/>
            <person name="Halpern A.L."/>
            <person name="Mobarry C.M."/>
            <person name="Lippert R."/>
            <person name="Walenz B."/>
            <person name="Shatkay H."/>
            <person name="Dew I."/>
            <person name="Miller J.R."/>
            <person name="Flanigan M.J."/>
            <person name="Edwards N.J."/>
            <person name="Bolanos R."/>
            <person name="Fasulo D."/>
            <person name="Halldorsson B.V."/>
            <person name="Hannenhalli S."/>
            <person name="Turner R."/>
            <person name="Yooseph S."/>
            <person name="Lu F."/>
            <person name="Nusskern D.R."/>
            <person name="Shue B.C."/>
            <person name="Zheng X.H."/>
            <person name="Zhong F."/>
            <person name="Delcher A.L."/>
            <person name="Huson D.H."/>
            <person name="Kravitz S.A."/>
            <person name="Mouchard L."/>
            <person name="Reinert K."/>
            <person name="Remington K.A."/>
            <person name="Clark A.G."/>
            <person name="Waterman M.S."/>
            <person name="Eichler E.E."/>
            <person name="Adams M.D."/>
            <person name="Hunkapiller M.W."/>
            <person name="Myers E.W."/>
            <person name="Venter J.C."/>
        </authorList>
    </citation>
    <scope>NUCLEOTIDE SEQUENCE [LARGE SCALE GENOMIC DNA]</scope>
</reference>
<reference key="8">
    <citation type="journal article" date="2004" name="Genome Res.">
        <title>The status, quality, and expansion of the NIH full-length cDNA project: the Mammalian Gene Collection (MGC).</title>
        <authorList>
            <consortium name="The MGC Project Team"/>
        </authorList>
    </citation>
    <scope>NUCLEOTIDE SEQUENCE [LARGE SCALE MRNA] (ISOFORMS 1 AND 2)</scope>
    <source>
        <tissue>Brain</tissue>
        <tissue>Liver</tissue>
    </source>
</reference>
<reference key="9">
    <citation type="journal article" date="2001" name="Biochem. Biophys. Res. Commun.">
        <title>Isolation of a family of organic anion transporters from human liver and kidney.</title>
        <authorList>
            <person name="Sun W."/>
            <person name="Wu R.R."/>
            <person name="van Poelje P.D."/>
            <person name="Erion M.D."/>
        </authorList>
    </citation>
    <scope>IDENTIFICATION</scope>
    <scope>TISSUE SPECIFICITY</scope>
</reference>
<reference key="10">
    <citation type="journal article" date="2016" name="Pharmacogenomics J.">
        <title>Variability in hepatic expression of organic anion transporter 7/SLC22A9, a novel pravastatin uptake transporter: impact of genetic and regulatory factors.</title>
        <authorList>
            <person name="Emami Riedmaier A."/>
            <person name="Burk O."/>
            <person name="van Eijck B.A."/>
            <person name="Schaeffeler E."/>
            <person name="Klein K."/>
            <person name="Fehr S."/>
            <person name="Biskup S."/>
            <person name="Mueller S."/>
            <person name="Winter S."/>
            <person name="Zanger U.M."/>
            <person name="Schwab M."/>
            <person name="Nies A.T."/>
        </authorList>
    </citation>
    <scope>FUNCTION</scope>
    <scope>TISSUE SPECIFICITY</scope>
</reference>
<reference key="11">
    <citation type="journal article" date="2018" name="Xenobiotica">
        <title>In vitro studies with two human organic anion transporters: OAT2 and OAT7.</title>
        <authorList>
            <person name="Mathialagan S."/>
            <person name="Costales C."/>
            <person name="Tylaska L."/>
            <person name="Kimoto E."/>
            <person name="Vildhede A."/>
            <person name="Johnson J."/>
            <person name="Johnson N."/>
            <person name="Sarashina T."/>
            <person name="Hashizume K."/>
            <person name="Isringhausen C.D."/>
            <person name="Vermeer L.M.M."/>
            <person name="Wolff A.R."/>
            <person name="Rodrigues A.D."/>
        </authorList>
    </citation>
    <scope>FUNCTION</scope>
    <scope>TRANSPORTER ACTIVITY</scope>
</reference>
<reference key="12">
    <citation type="journal article" date="2006" name="Science">
        <title>The consensus coding sequences of human breast and colorectal cancers.</title>
        <authorList>
            <person name="Sjoeblom T."/>
            <person name="Jones S."/>
            <person name="Wood L.D."/>
            <person name="Parsons D.W."/>
            <person name="Lin J."/>
            <person name="Barber T.D."/>
            <person name="Mandelker D."/>
            <person name="Leary R.J."/>
            <person name="Ptak J."/>
            <person name="Silliman N."/>
            <person name="Szabo S."/>
            <person name="Buckhaults P."/>
            <person name="Farrell C."/>
            <person name="Meeh P."/>
            <person name="Markowitz S.D."/>
            <person name="Willis J."/>
            <person name="Dawson D."/>
            <person name="Willson J.K.V."/>
            <person name="Gazdar A.F."/>
            <person name="Hartigan J."/>
            <person name="Wu L."/>
            <person name="Liu C."/>
            <person name="Parmigiani G."/>
            <person name="Park B.H."/>
            <person name="Bachman K.E."/>
            <person name="Papadopoulos N."/>
            <person name="Vogelstein B."/>
            <person name="Kinzler K.W."/>
            <person name="Velculescu V.E."/>
        </authorList>
    </citation>
    <scope>VARIANTS [LARGE SCALE ANALYSIS] VAL-393; VAL-487 AND LYS-521</scope>
</reference>
<name>S22A9_HUMAN</name>
<dbReference type="EMBL" id="AB074812">
    <property type="protein sequence ID" value="BAF51552.1"/>
    <property type="molecule type" value="mRNA"/>
</dbReference>
<dbReference type="EMBL" id="AJ295270">
    <property type="protein sequence ID" value="CAC82910.1"/>
    <property type="molecule type" value="mRNA"/>
</dbReference>
<dbReference type="EMBL" id="AB062418">
    <property type="protein sequence ID" value="BAB83517.1"/>
    <property type="molecule type" value="mRNA"/>
</dbReference>
<dbReference type="EMBL" id="AF440402">
    <property type="protein sequence ID" value="AAP97316.1"/>
    <property type="molecule type" value="mRNA"/>
</dbReference>
<dbReference type="EMBL" id="AK074246">
    <property type="protein sequence ID" value="BAB85030.1"/>
    <property type="molecule type" value="mRNA"/>
</dbReference>
<dbReference type="EMBL" id="AP001880">
    <property type="status" value="NOT_ANNOTATED_CDS"/>
    <property type="molecule type" value="Genomic_DNA"/>
</dbReference>
<dbReference type="EMBL" id="AP000484">
    <property type="status" value="NOT_ANNOTATED_CDS"/>
    <property type="molecule type" value="Genomic_DNA"/>
</dbReference>
<dbReference type="EMBL" id="CH471076">
    <property type="protein sequence ID" value="EAW74146.1"/>
    <property type="molecule type" value="Genomic_DNA"/>
</dbReference>
<dbReference type="EMBL" id="CH471076">
    <property type="protein sequence ID" value="EAW74148.1"/>
    <property type="molecule type" value="Genomic_DNA"/>
</dbReference>
<dbReference type="EMBL" id="BC022379">
    <property type="protein sequence ID" value="AAH22379.1"/>
    <property type="molecule type" value="mRNA"/>
</dbReference>
<dbReference type="EMBL" id="BC126288">
    <property type="protein sequence ID" value="AAI26289.1"/>
    <property type="molecule type" value="mRNA"/>
</dbReference>
<dbReference type="CCDS" id="CCDS8043.1">
    <molecule id="Q8IVM8-1"/>
</dbReference>
<dbReference type="RefSeq" id="NP_543142.2">
    <molecule id="Q8IVM8-1"/>
    <property type="nucleotide sequence ID" value="NM_080866.2"/>
</dbReference>
<dbReference type="SMR" id="Q8IVM8"/>
<dbReference type="BioGRID" id="125322">
    <property type="interactions" value="149"/>
</dbReference>
<dbReference type="FunCoup" id="Q8IVM8">
    <property type="interactions" value="87"/>
</dbReference>
<dbReference type="IntAct" id="Q8IVM8">
    <property type="interactions" value="116"/>
</dbReference>
<dbReference type="MINT" id="Q8IVM8"/>
<dbReference type="STRING" id="9606.ENSP00000279178"/>
<dbReference type="ChEMBL" id="CHEMBL2073721"/>
<dbReference type="TCDB" id="2.A.1.19.18">
    <property type="family name" value="the major facilitator superfamily (mfs)"/>
</dbReference>
<dbReference type="GlyCosmos" id="Q8IVM8">
    <property type="glycosylation" value="3 sites, No reported glycans"/>
</dbReference>
<dbReference type="GlyGen" id="Q8IVM8">
    <property type="glycosylation" value="5 sites, 1 O-linked glycan (2 sites)"/>
</dbReference>
<dbReference type="iPTMnet" id="Q8IVM8"/>
<dbReference type="PhosphoSitePlus" id="Q8IVM8"/>
<dbReference type="BioMuta" id="SLC22A9"/>
<dbReference type="DMDM" id="74723638"/>
<dbReference type="jPOST" id="Q8IVM8"/>
<dbReference type="MassIVE" id="Q8IVM8"/>
<dbReference type="PaxDb" id="9606-ENSP00000279178"/>
<dbReference type="PeptideAtlas" id="Q8IVM8"/>
<dbReference type="ProteomicsDB" id="70744">
    <molecule id="Q8IVM8-1"/>
</dbReference>
<dbReference type="ProteomicsDB" id="70745">
    <molecule id="Q8IVM8-2"/>
</dbReference>
<dbReference type="Antibodypedia" id="2750">
    <property type="antibodies" value="56 antibodies from 15 providers"/>
</dbReference>
<dbReference type="DNASU" id="114571"/>
<dbReference type="Ensembl" id="ENST00000279178.4">
    <molecule id="Q8IVM8-1"/>
    <property type="protein sequence ID" value="ENSP00000279178.3"/>
    <property type="gene ID" value="ENSG00000149742.10"/>
</dbReference>
<dbReference type="Ensembl" id="ENST00000536333.5">
    <molecule id="Q8IVM8-2"/>
    <property type="protein sequence ID" value="ENSP00000440206.1"/>
    <property type="gene ID" value="ENSG00000149742.10"/>
</dbReference>
<dbReference type="GeneID" id="114571"/>
<dbReference type="KEGG" id="hsa:114571"/>
<dbReference type="MANE-Select" id="ENST00000279178.4">
    <property type="protein sequence ID" value="ENSP00000279178.3"/>
    <property type="RefSeq nucleotide sequence ID" value="NM_080866.3"/>
    <property type="RefSeq protein sequence ID" value="NP_543142.2"/>
</dbReference>
<dbReference type="UCSC" id="uc001nww.4">
    <molecule id="Q8IVM8-1"/>
    <property type="organism name" value="human"/>
</dbReference>
<dbReference type="AGR" id="HGNC:16261"/>
<dbReference type="CTD" id="114571"/>
<dbReference type="DisGeNET" id="114571"/>
<dbReference type="GeneCards" id="SLC22A9"/>
<dbReference type="HGNC" id="HGNC:16261">
    <property type="gene designation" value="SLC22A9"/>
</dbReference>
<dbReference type="HPA" id="ENSG00000149742">
    <property type="expression patterns" value="Tissue enriched (liver)"/>
</dbReference>
<dbReference type="MIM" id="607579">
    <property type="type" value="gene"/>
</dbReference>
<dbReference type="neXtProt" id="NX_Q8IVM8"/>
<dbReference type="OpenTargets" id="ENSG00000149742"/>
<dbReference type="PharmGKB" id="PA38102"/>
<dbReference type="VEuPathDB" id="HostDB:ENSG00000149742"/>
<dbReference type="eggNOG" id="KOG0255">
    <property type="taxonomic scope" value="Eukaryota"/>
</dbReference>
<dbReference type="GeneTree" id="ENSGT00940000161239"/>
<dbReference type="HOGENOM" id="CLU_001265_33_0_1"/>
<dbReference type="InParanoid" id="Q8IVM8"/>
<dbReference type="OMA" id="NERKDSR"/>
<dbReference type="OrthoDB" id="2544694at2759"/>
<dbReference type="PAN-GO" id="Q8IVM8">
    <property type="GO annotations" value="1 GO annotation based on evolutionary models"/>
</dbReference>
<dbReference type="PhylomeDB" id="Q8IVM8"/>
<dbReference type="TreeFam" id="TF315847"/>
<dbReference type="PathwayCommons" id="Q8IVM8"/>
<dbReference type="SignaLink" id="Q8IVM8"/>
<dbReference type="SIGNOR" id="Q8IVM8"/>
<dbReference type="BioGRID-ORCS" id="114571">
    <property type="hits" value="13 hits in 1136 CRISPR screens"/>
</dbReference>
<dbReference type="GeneWiki" id="SLC22A9"/>
<dbReference type="GenomeRNAi" id="114571"/>
<dbReference type="Pharos" id="Q8IVM8">
    <property type="development level" value="Tbio"/>
</dbReference>
<dbReference type="PRO" id="PR:Q8IVM8"/>
<dbReference type="Proteomes" id="UP000005640">
    <property type="component" value="Chromosome 11"/>
</dbReference>
<dbReference type="RNAct" id="Q8IVM8">
    <property type="molecule type" value="protein"/>
</dbReference>
<dbReference type="Bgee" id="ENSG00000149742">
    <property type="expression patterns" value="Expressed in right lobe of liver and 31 other cell types or tissues"/>
</dbReference>
<dbReference type="GO" id="GO:0016323">
    <property type="term" value="C:basolateral plasma membrane"/>
    <property type="evidence" value="ECO:0000314"/>
    <property type="project" value="UniProtKB"/>
</dbReference>
<dbReference type="GO" id="GO:0008514">
    <property type="term" value="F:organic anion transmembrane transporter activity"/>
    <property type="evidence" value="ECO:0000314"/>
    <property type="project" value="UniProtKB"/>
</dbReference>
<dbReference type="GO" id="GO:0015636">
    <property type="term" value="F:short-chain fatty acid transmembrane transporter activity"/>
    <property type="evidence" value="ECO:0000314"/>
    <property type="project" value="UniProtKB"/>
</dbReference>
<dbReference type="GO" id="GO:0015347">
    <property type="term" value="F:sodium-independent organic anion transmembrane transporter activity"/>
    <property type="evidence" value="ECO:0000314"/>
    <property type="project" value="UniProtKB"/>
</dbReference>
<dbReference type="GO" id="GO:0009914">
    <property type="term" value="P:hormone transport"/>
    <property type="evidence" value="ECO:0000314"/>
    <property type="project" value="UniProtKB"/>
</dbReference>
<dbReference type="GO" id="GO:0015711">
    <property type="term" value="P:organic anion transport"/>
    <property type="evidence" value="ECO:0000318"/>
    <property type="project" value="GO_Central"/>
</dbReference>
<dbReference type="GO" id="GO:0015913">
    <property type="term" value="P:short-chain fatty acid transmembrane transport"/>
    <property type="evidence" value="ECO:0000314"/>
    <property type="project" value="UniProtKB"/>
</dbReference>
<dbReference type="GO" id="GO:0043252">
    <property type="term" value="P:sodium-independent organic anion transport"/>
    <property type="evidence" value="ECO:0000314"/>
    <property type="project" value="UniProtKB"/>
</dbReference>
<dbReference type="CDD" id="cd17374">
    <property type="entry name" value="MFS_OAT"/>
    <property type="match status" value="1"/>
</dbReference>
<dbReference type="FunFam" id="1.20.1250.20:FF:000023">
    <property type="entry name" value="Solute carrier family 22 member 6"/>
    <property type="match status" value="1"/>
</dbReference>
<dbReference type="Gene3D" id="1.20.1250.20">
    <property type="entry name" value="MFS general substrate transporter like domains"/>
    <property type="match status" value="1"/>
</dbReference>
<dbReference type="InterPro" id="IPR011701">
    <property type="entry name" value="MFS"/>
</dbReference>
<dbReference type="InterPro" id="IPR020846">
    <property type="entry name" value="MFS_dom"/>
</dbReference>
<dbReference type="InterPro" id="IPR036259">
    <property type="entry name" value="MFS_trans_sf"/>
</dbReference>
<dbReference type="PANTHER" id="PTHR24064">
    <property type="entry name" value="SOLUTE CARRIER FAMILY 22 MEMBER"/>
    <property type="match status" value="1"/>
</dbReference>
<dbReference type="Pfam" id="PF07690">
    <property type="entry name" value="MFS_1"/>
    <property type="match status" value="1"/>
</dbReference>
<dbReference type="SUPFAM" id="SSF103473">
    <property type="entry name" value="MFS general substrate transporter"/>
    <property type="match status" value="1"/>
</dbReference>
<dbReference type="PROSITE" id="PS50850">
    <property type="entry name" value="MFS"/>
    <property type="match status" value="1"/>
</dbReference>
<comment type="function">
    <text evidence="5 6 7">Sodium-independent organic anion transporter, exhibits high specificity for sulfated conjugates of xenobiotics and steroid hormones such as estrone 3-sulfate (E1S) and dehydroepiandrosterone sulfate (DHEAS) (PubMed:17393504, PubMed:26239079, PubMed:28945155). Can transport the statin pravastatin and may contribute to its disposition into the hepatocytes when the function of OATPs is compromised (PubMed:26239079). It is specifically activated by 3 to 5 carbons-containing short-chain fatty acids/SCFAs, including propionate (propanoate), butyrate (butanoate) and valerate (pentanoate) (PubMed:17393504). May operate the exchange of sulfated organic components against short-chain fatty acids/SCFAs, in particular butanoate, at the sinusoidal membrane of hepatocytes (PubMed:17393504).</text>
</comment>
<comment type="catalytic activity">
    <reaction evidence="5 12">
        <text>butanoate(out) + estrone 3-sulfate(in) = butanoate(in) + estrone 3-sulfate(out)</text>
        <dbReference type="Rhea" id="RHEA:72051"/>
        <dbReference type="ChEBI" id="CHEBI:17968"/>
        <dbReference type="ChEBI" id="CHEBI:60050"/>
    </reaction>
</comment>
<comment type="catalytic activity">
    <reaction evidence="5 12">
        <text>propanoate(in) + estrone 3-sulfate(out) = propanoate(out) + estrone 3-sulfate(in)</text>
        <dbReference type="Rhea" id="RHEA:72555"/>
        <dbReference type="ChEBI" id="CHEBI:17272"/>
        <dbReference type="ChEBI" id="CHEBI:60050"/>
    </reaction>
</comment>
<comment type="catalytic activity">
    <reaction evidence="5 12">
        <text>pentanoate(in) + estrone 3-sulfate(out) = pentanoate(out) + estrone 3-sulfate(in)</text>
        <dbReference type="Rhea" id="RHEA:72559"/>
        <dbReference type="ChEBI" id="CHEBI:31011"/>
        <dbReference type="ChEBI" id="CHEBI:60050"/>
    </reaction>
</comment>
<comment type="catalytic activity">
    <reaction evidence="11 12">
        <text>dehydroepiandrosterone 3-sulfate(in) + butanoate(out) = dehydroepiandrosterone 3-sulfate(out) + butanoate(in)</text>
        <dbReference type="Rhea" id="RHEA:72563"/>
        <dbReference type="ChEBI" id="CHEBI:17968"/>
        <dbReference type="ChEBI" id="CHEBI:57905"/>
    </reaction>
</comment>
<comment type="catalytic activity">
    <reaction evidence="11 12">
        <text>propanoate(out) + dehydroepiandrosterone 3-sulfate(in) = propanoate(in) + dehydroepiandrosterone 3-sulfate(out)</text>
        <dbReference type="Rhea" id="RHEA:72567"/>
        <dbReference type="ChEBI" id="CHEBI:17272"/>
        <dbReference type="ChEBI" id="CHEBI:57905"/>
    </reaction>
</comment>
<comment type="catalytic activity">
    <reaction evidence="11 12">
        <text>pentanoate(out) + dehydroepiandrosterone 3-sulfate(in) = pentanoate(in) + dehydroepiandrosterone 3-sulfate(out)</text>
        <dbReference type="Rhea" id="RHEA:72571"/>
        <dbReference type="ChEBI" id="CHEBI:31011"/>
        <dbReference type="ChEBI" id="CHEBI:57905"/>
    </reaction>
</comment>
<comment type="biophysicochemical properties">
    <kinetics>
        <KM evidence="5">8.7 uM for estrone 3-sulfate</KM>
        <KM evidence="5">2.2 uM for dehydroepiandrosterone sulfate</KM>
    </kinetics>
</comment>
<comment type="subcellular location">
    <subcellularLocation>
        <location evidence="5">Basolateral cell membrane</location>
        <topology evidence="5">Multi-pass membrane protein</topology>
    </subcellularLocation>
    <text>Enriched at the sinusoidal part of the plasma membrane.</text>
</comment>
<comment type="alternative products">
    <event type="alternative splicing"/>
    <isoform>
        <id>Q8IVM8-1</id>
        <name>1</name>
        <sequence type="displayed"/>
    </isoform>
    <isoform>
        <id>Q8IVM8-2</id>
        <name>2</name>
        <sequence type="described" ref="VSP_036710 VSP_036711"/>
    </isoform>
</comment>
<comment type="tissue specificity">
    <text evidence="3 5 6">Specifically expressed in liver (also at protein level).</text>
</comment>
<comment type="developmental stage">
    <text evidence="5">Expressed in fetal liver.</text>
</comment>
<comment type="miscellaneous">
    <molecule>Isoform 2</molecule>
    <text evidence="10">May be produced at very low levels due to a premature stop codon in the mRNA, leading to nonsense-mediated mRNA decay.</text>
</comment>
<comment type="similarity">
    <text evidence="10">Belongs to the major facilitator (TC 2.A.1) superfamily. Organic cation transporter (TC 2.A.1.19) family.</text>
</comment>
<protein>
    <recommendedName>
        <fullName evidence="9">Organic anion transporter 7</fullName>
        <shortName evidence="9">OAT7</shortName>
    </recommendedName>
    <alternativeName>
        <fullName>Organic anion/short-chain fatty acid exchanger</fullName>
    </alternativeName>
    <alternativeName>
        <fullName>Solute carrier family 22 member 9</fullName>
    </alternativeName>
</protein>
<feature type="chain" id="PRO_0000233715" description="Organic anion transporter 7">
    <location>
        <begin position="1"/>
        <end position="553"/>
    </location>
</feature>
<feature type="topological domain" description="Cytoplasmic" evidence="1">
    <location>
        <begin position="1"/>
        <end position="15"/>
    </location>
</feature>
<feature type="transmembrane region" description="Helical" evidence="1">
    <location>
        <begin position="16"/>
        <end position="36"/>
    </location>
</feature>
<feature type="topological domain" description="Extracellular" evidence="1">
    <location>
        <begin position="37"/>
        <end position="143"/>
    </location>
</feature>
<feature type="transmembrane region" description="Helical" evidence="1">
    <location>
        <begin position="144"/>
        <end position="164"/>
    </location>
</feature>
<feature type="topological domain" description="Cytoplasmic" evidence="1">
    <location>
        <begin position="165"/>
        <end position="177"/>
    </location>
</feature>
<feature type="transmembrane region" description="Helical" evidence="1">
    <location>
        <begin position="178"/>
        <end position="198"/>
    </location>
</feature>
<feature type="topological domain" description="Extracellular" evidence="1">
    <location>
        <begin position="199"/>
        <end position="203"/>
    </location>
</feature>
<feature type="transmembrane region" description="Helical" evidence="1">
    <location>
        <begin position="204"/>
        <end position="224"/>
    </location>
</feature>
<feature type="topological domain" description="Cytoplasmic" evidence="1">
    <location>
        <begin position="225"/>
        <end position="233"/>
    </location>
</feature>
<feature type="transmembrane region" description="Helical" evidence="1">
    <location>
        <begin position="234"/>
        <end position="254"/>
    </location>
</feature>
<feature type="topological domain" description="Extracellular" evidence="1">
    <location>
        <begin position="255"/>
        <end position="259"/>
    </location>
</feature>
<feature type="transmembrane region" description="Helical" evidence="1">
    <location>
        <begin position="260"/>
        <end position="280"/>
    </location>
</feature>
<feature type="topological domain" description="Cytoplasmic" evidence="1">
    <location>
        <begin position="281"/>
        <end position="350"/>
    </location>
</feature>
<feature type="transmembrane region" description="Helical" evidence="1">
    <location>
        <begin position="351"/>
        <end position="369"/>
    </location>
</feature>
<feature type="topological domain" description="Extracellular" evidence="1">
    <location>
        <begin position="370"/>
        <end position="378"/>
    </location>
</feature>
<feature type="transmembrane region" description="Helical" evidence="1">
    <location>
        <begin position="379"/>
        <end position="399"/>
    </location>
</feature>
<feature type="topological domain" description="Cytoplasmic" evidence="1">
    <location>
        <begin position="400"/>
        <end position="407"/>
    </location>
</feature>
<feature type="transmembrane region" description="Helical" evidence="1">
    <location>
        <begin position="408"/>
        <end position="428"/>
    </location>
</feature>
<feature type="topological domain" description="Extracellular" evidence="1">
    <location>
        <begin position="429"/>
        <end position="436"/>
    </location>
</feature>
<feature type="transmembrane region" description="Helical" evidence="1">
    <location>
        <begin position="437"/>
        <end position="457"/>
    </location>
</feature>
<feature type="topological domain" description="Cytoplasmic" evidence="1">
    <location>
        <begin position="458"/>
        <end position="469"/>
    </location>
</feature>
<feature type="transmembrane region" description="Helical" evidence="1">
    <location>
        <begin position="470"/>
        <end position="490"/>
    </location>
</feature>
<feature type="topological domain" description="Extracellular" evidence="1">
    <location>
        <begin position="491"/>
        <end position="495"/>
    </location>
</feature>
<feature type="transmembrane region" description="Helical" evidence="1">
    <location>
        <begin position="496"/>
        <end position="516"/>
    </location>
</feature>
<feature type="topological domain" description="Cytoplasmic" evidence="1">
    <location>
        <begin position="517"/>
        <end position="553"/>
    </location>
</feature>
<feature type="region of interest" description="Disordered" evidence="2">
    <location>
        <begin position="528"/>
        <end position="553"/>
    </location>
</feature>
<feature type="glycosylation site" description="N-linked (GlcNAc...) asparagine" evidence="1">
    <location>
        <position position="39"/>
    </location>
</feature>
<feature type="glycosylation site" description="N-linked (GlcNAc...) asparagine" evidence="1">
    <location>
        <position position="56"/>
    </location>
</feature>
<feature type="glycosylation site" description="N-linked (GlcNAc...) asparagine" evidence="1">
    <location>
        <position position="102"/>
    </location>
</feature>
<feature type="splice variant" id="VSP_036710" description="In isoform 2." evidence="8">
    <original>RFGRRFVLRWCYLQVAIVGTCAALAPTFLIYCSLRFLSGIAAMSLITNTIMLIAEWATHRFQAMGITLGMCPSGIAFMTLAGLAFAIRDWHILQLVVSVPYFVIFLTSSWLLESARWLIINNKPEEGLKELRKAAHRSGMKNARDTLTLEILKSTMKKELEAAQKKKPSLCEMLHMPN</original>
    <variation>SSRVGNTQIPGHGNYIGNVPFWYCIYDPGRPGFCHSRLAYPPAGGVCTILCDLSDLKLAARVCSVAHYQQ</variation>
    <location>
        <begin position="169"/>
        <end position="346"/>
    </location>
</feature>
<feature type="splice variant" id="VSP_036711" description="In isoform 2." evidence="8">
    <location>
        <begin position="347"/>
        <end position="553"/>
    </location>
</feature>
<feature type="sequence variant" id="VAR_036403" description="In a breast cancer sample; somatic mutation." evidence="4">
    <original>A</original>
    <variation>V</variation>
    <location>
        <position position="393"/>
    </location>
</feature>
<feature type="sequence variant" id="VAR_036404" description="In a breast cancer sample; somatic mutation." evidence="4">
    <original>M</original>
    <variation>V</variation>
    <location>
        <position position="487"/>
    </location>
</feature>
<feature type="sequence variant" id="VAR_036405" description="In a colorectal cancer sample; somatic mutation; dbSNP:rs770073076." evidence="4">
    <original>N</original>
    <variation>K</variation>
    <location>
        <position position="521"/>
    </location>
</feature>
<feature type="sequence conflict" description="In Ref. 3; BAB83517." evidence="10" ref="3">
    <original>E</original>
    <variation>G</variation>
    <location>
        <position position="518"/>
    </location>
</feature>
<feature type="sequence conflict" description="In Ref. 5; BAB85030." evidence="10" ref="5">
    <location>
        <position position="535"/>
    </location>
</feature>
<sequence>MAFQDLLGHAGDLWRFQILQTVFLSIFAVATYLHFMLENFTAFIPGHRCWVHILDNDTVSDNDTGALSQDALLRISIPLDSNMRPEKCRRFVHPQWQLLHLNGTFPNTSDADMEPCVDGWVYDRISFSSTIVTEWDLVCDSQSLTSVAKFVFMAGMMVGGILGGHLSDRFGRRFVLRWCYLQVAIVGTCAALAPTFLIYCSLRFLSGIAAMSLITNTIMLIAEWATHRFQAMGITLGMCPSGIAFMTLAGLAFAIRDWHILQLVVSVPYFVIFLTSSWLLESARWLIINNKPEEGLKELRKAAHRSGMKNARDTLTLEILKSTMKKELEAAQKKKPSLCEMLHMPNICKRISLLSFTRFANFMAYFGLNLHVQHLGNNVFLLQTLFGAVILLANCVAPWALKYMNRRASQMLLMFLLAICLLAIIFVPQEMQTLREVLATLGLGASALANTLAFAHGNEVIPTIIRARAMGINATFANIAGALAPLMMILSVYSPPLPWIIYGVFPFISGFAFLLLPETRNKPLFDTIQDEKNERKDPREPKQEDPRVEVTQF</sequence>
<accession>Q8IVM8</accession>
<accession>A0AVB7</accession>
<accession>A4PB24</accession>
<accession>Q8TCC8</accession>
<accession>Q8TEC0</accession>
<accession>Q8WYN7</accession>